<comment type="function">
    <text>Involved in the transposition of the insertion sequence IS3.</text>
</comment>
<comment type="similarity">
    <text evidence="2">Belongs to the transposase 8 family.</text>
</comment>
<comment type="sequence caution" evidence="2">
    <conflict type="erroneous initiation">
        <sequence resource="EMBL-CDS" id="AAB18026"/>
    </conflict>
    <text>Extended N-terminus.</text>
</comment>
<comment type="sequence caution" evidence="2">
    <conflict type="erroneous initiation">
        <sequence resource="EMBL-CDS" id="BAE76083"/>
    </conflict>
    <text>Extended N-terminus.</text>
</comment>
<keyword id="KW-0233">DNA recombination</keyword>
<keyword id="KW-0238">DNA-binding</keyword>
<keyword id="KW-1185">Reference proteome</keyword>
<keyword id="KW-0814">Transposable element</keyword>
<keyword id="KW-0815">Transposition</keyword>
<reference key="1">
    <citation type="journal article" date="1985" name="Nucleic Acids Res.">
        <title>Complete sequence of IS3.</title>
        <authorList>
            <person name="Timmerman K.P."/>
            <person name="Tu C.P.D."/>
        </authorList>
    </citation>
    <scope>NUCLEOTIDE SEQUENCE [GENOMIC DNA]</scope>
</reference>
<reference key="2">
    <citation type="submission" date="1997-01" db="EMBL/GenBank/DDBJ databases">
        <title>Sequence of minutes 4-25 of Escherichia coli.</title>
        <authorList>
            <person name="Chung E."/>
            <person name="Allen E."/>
            <person name="Araujo R."/>
            <person name="Aparicio A.M."/>
            <person name="Davis K."/>
            <person name="Duncan M."/>
            <person name="Federspiel N."/>
            <person name="Hyman R."/>
            <person name="Kalman S."/>
            <person name="Komp C."/>
            <person name="Kurdi O."/>
            <person name="Lew H."/>
            <person name="Lin D."/>
            <person name="Namath A."/>
            <person name="Oefner P."/>
            <person name="Roberts D."/>
            <person name="Schramm S."/>
            <person name="Davis R.W."/>
        </authorList>
    </citation>
    <scope>NUCLEOTIDE SEQUENCE [LARGE SCALE GENOMIC DNA]</scope>
    <source>
        <strain>K12 / MG1655 / ATCC 47076</strain>
    </source>
</reference>
<reference key="3">
    <citation type="journal article" date="1997" name="Science">
        <title>The complete genome sequence of Escherichia coli K-12.</title>
        <authorList>
            <person name="Blattner F.R."/>
            <person name="Plunkett G. III"/>
            <person name="Bloch C.A."/>
            <person name="Perna N.T."/>
            <person name="Burland V."/>
            <person name="Riley M."/>
            <person name="Collado-Vides J."/>
            <person name="Glasner J.D."/>
            <person name="Rode C.K."/>
            <person name="Mayhew G.F."/>
            <person name="Gregor J."/>
            <person name="Davis N.W."/>
            <person name="Kirkpatrick H.A."/>
            <person name="Goeden M.A."/>
            <person name="Rose D.J."/>
            <person name="Mau B."/>
            <person name="Shao Y."/>
        </authorList>
    </citation>
    <scope>NUCLEOTIDE SEQUENCE [LARGE SCALE GENOMIC DNA]</scope>
    <source>
        <strain>K12 / MG1655 / ATCC 47076</strain>
    </source>
</reference>
<reference key="4">
    <citation type="journal article" date="2006" name="Mol. Syst. Biol.">
        <title>Highly accurate genome sequences of Escherichia coli K-12 strains MG1655 and W3110.</title>
        <authorList>
            <person name="Hayashi K."/>
            <person name="Morooka N."/>
            <person name="Yamamoto Y."/>
            <person name="Fujita K."/>
            <person name="Isono K."/>
            <person name="Choi S."/>
            <person name="Ohtsubo E."/>
            <person name="Baba T."/>
            <person name="Wanner B.L."/>
            <person name="Mori H."/>
            <person name="Horiuchi T."/>
        </authorList>
    </citation>
    <scope>NUCLEOTIDE SEQUENCE [LARGE SCALE GENOMIC DNA]</scope>
    <source>
        <strain>K12 / W3110 / ATCC 27325 / DSM 5911</strain>
    </source>
</reference>
<accession>P0CF66</accession>
<accession>P0ADH3</accession>
<accession>P77681</accession>
<accession>Q2MCC3</accession>
<accession>Q9S136</accession>
<gene>
    <name type="primary">insE1</name>
    <name type="ordered locus">b0298</name>
    <name type="ordered locus">JW5036</name>
</gene>
<feature type="chain" id="PRO_0000075412" description="Transposase InsE for insertion sequence IS3A">
    <location>
        <begin position="1"/>
        <end position="99"/>
    </location>
</feature>
<feature type="region of interest" description="Disordered" evidence="1">
    <location>
        <begin position="1"/>
        <end position="21"/>
    </location>
</feature>
<dbReference type="EMBL" id="X02311">
    <property type="status" value="NOT_ANNOTATED_CDS"/>
    <property type="molecule type" value="Genomic_DNA"/>
</dbReference>
<dbReference type="EMBL" id="U73857">
    <property type="protein sequence ID" value="AAB18026.1"/>
    <property type="status" value="ALT_INIT"/>
    <property type="molecule type" value="Genomic_DNA"/>
</dbReference>
<dbReference type="EMBL" id="U00096">
    <property type="protein sequence ID" value="AAC73401.2"/>
    <property type="molecule type" value="Genomic_DNA"/>
</dbReference>
<dbReference type="EMBL" id="AP009048">
    <property type="protein sequence ID" value="BAE76083.1"/>
    <property type="status" value="ALT_INIT"/>
    <property type="molecule type" value="Genomic_DNA"/>
</dbReference>
<dbReference type="PIR" id="A64845">
    <property type="entry name" value="A64845"/>
</dbReference>
<dbReference type="RefSeq" id="NP_061380.1">
    <property type="nucleotide sequence ID" value="NC_002483.1"/>
</dbReference>
<dbReference type="RefSeq" id="NP_061395.1">
    <property type="nucleotide sequence ID" value="NC_002483.1"/>
</dbReference>
<dbReference type="RefSeq" id="NP_414832.2">
    <property type="nucleotide sequence ID" value="NC_000913.3"/>
</dbReference>
<dbReference type="SMR" id="P0CF66"/>
<dbReference type="DIP" id="DIP-47960N"/>
<dbReference type="FunCoup" id="P0CF66">
    <property type="interactions" value="50"/>
</dbReference>
<dbReference type="STRING" id="511145.b0298"/>
<dbReference type="PaxDb" id="511145-b0298"/>
<dbReference type="EnsemblBacteria" id="AAC73401">
    <property type="protein sequence ID" value="AAC73401"/>
    <property type="gene ID" value="b0298"/>
</dbReference>
<dbReference type="GeneID" id="944952"/>
<dbReference type="KEGG" id="ecj:JW5036"/>
<dbReference type="KEGG" id="eco:b0298"/>
<dbReference type="KEGG" id="eco:b0373"/>
<dbReference type="KEGG" id="eco:b0540"/>
<dbReference type="KEGG" id="eco:b1027"/>
<dbReference type="KEGG" id="eco:b2088"/>
<dbReference type="KEGG" id="ecoc:C3026_01465"/>
<dbReference type="KEGG" id="ecoc:C3026_02655"/>
<dbReference type="KEGG" id="ecoc:C3026_06255"/>
<dbReference type="KEGG" id="ecoc:C3026_11725"/>
<dbReference type="KEGG" id="ecoc:C3026_24095"/>
<dbReference type="KEGG" id="ecoc:C3026_24185"/>
<dbReference type="KEGG" id="ecoc:C3026_24640"/>
<dbReference type="EchoBASE" id="EB4709"/>
<dbReference type="eggNOG" id="COG2963">
    <property type="taxonomic scope" value="Bacteria"/>
</dbReference>
<dbReference type="HOGENOM" id="CLU_027402_18_0_6"/>
<dbReference type="InParanoid" id="P0CF66"/>
<dbReference type="OMA" id="LHESQIY"/>
<dbReference type="PhylomeDB" id="P0CF66"/>
<dbReference type="BioCyc" id="EcoCyc:G6534-MONOMER"/>
<dbReference type="PRO" id="PR:P0CF66"/>
<dbReference type="Proteomes" id="UP000000625">
    <property type="component" value="Chromosome"/>
</dbReference>
<dbReference type="GO" id="GO:0003677">
    <property type="term" value="F:DNA binding"/>
    <property type="evidence" value="ECO:0007669"/>
    <property type="project" value="UniProtKB-KW"/>
</dbReference>
<dbReference type="GO" id="GO:0004803">
    <property type="term" value="F:transposase activity"/>
    <property type="evidence" value="ECO:0007669"/>
    <property type="project" value="InterPro"/>
</dbReference>
<dbReference type="GO" id="GO:0006313">
    <property type="term" value="P:DNA transposition"/>
    <property type="evidence" value="ECO:0000314"/>
    <property type="project" value="EcoCyc"/>
</dbReference>
<dbReference type="InterPro" id="IPR009057">
    <property type="entry name" value="Homeodomain-like_sf"/>
</dbReference>
<dbReference type="InterPro" id="IPR051839">
    <property type="entry name" value="RD_transcriptional_regulator"/>
</dbReference>
<dbReference type="InterPro" id="IPR002514">
    <property type="entry name" value="Transposase_8"/>
</dbReference>
<dbReference type="PANTHER" id="PTHR33215">
    <property type="entry name" value="PROTEIN DISTAL ANTENNA"/>
    <property type="match status" value="1"/>
</dbReference>
<dbReference type="PANTHER" id="PTHR33215:SF6">
    <property type="entry name" value="TRANSPOSASE INSE FOR INSERTION SEQUENCE IS3A-RELATED"/>
    <property type="match status" value="1"/>
</dbReference>
<dbReference type="Pfam" id="PF01527">
    <property type="entry name" value="HTH_Tnp_1"/>
    <property type="match status" value="1"/>
</dbReference>
<dbReference type="SUPFAM" id="SSF46689">
    <property type="entry name" value="Homeodomain-like"/>
    <property type="match status" value="1"/>
</dbReference>
<name>INSE1_ECOLI</name>
<protein>
    <recommendedName>
        <fullName>Transposase InsE for insertion sequence IS3A</fullName>
    </recommendedName>
</protein>
<evidence type="ECO:0000256" key="1">
    <source>
        <dbReference type="SAM" id="MobiDB-lite"/>
    </source>
</evidence>
<evidence type="ECO:0000305" key="2"/>
<organism>
    <name type="scientific">Escherichia coli (strain K12)</name>
    <dbReference type="NCBI Taxonomy" id="83333"/>
    <lineage>
        <taxon>Bacteria</taxon>
        <taxon>Pseudomonadati</taxon>
        <taxon>Pseudomonadota</taxon>
        <taxon>Gammaproteobacteria</taxon>
        <taxon>Enterobacterales</taxon>
        <taxon>Enterobacteriaceae</taxon>
        <taxon>Escherichia</taxon>
    </lineage>
</organism>
<sequence>MTKTVSTSKKPRKQHSPEFRSEALKLAERIGVTAAARELSLYESQLYNWRSKQQNQQTSSERELEMSTEIARLKRQLAERDEELAILQKAATYFAKRLK</sequence>
<proteinExistence type="inferred from homology"/>